<evidence type="ECO:0000255" key="1">
    <source>
        <dbReference type="HAMAP-Rule" id="MF_00451"/>
    </source>
</evidence>
<proteinExistence type="inferred from homology"/>
<gene>
    <name evidence="1" type="primary">ndk</name>
    <name type="ordered locus">Dhaf_0146</name>
</gene>
<protein>
    <recommendedName>
        <fullName evidence="1">Nucleoside diphosphate kinase</fullName>
        <shortName evidence="1">NDK</shortName>
        <shortName evidence="1">NDP kinase</shortName>
        <ecNumber evidence="1">2.7.4.6</ecNumber>
    </recommendedName>
    <alternativeName>
        <fullName evidence="1">Nucleoside-2-P kinase</fullName>
    </alternativeName>
</protein>
<accession>B8FZD1</accession>
<name>NDK_DESHD</name>
<feature type="chain" id="PRO_1000135251" description="Nucleoside diphosphate kinase">
    <location>
        <begin position="1"/>
        <end position="149"/>
    </location>
</feature>
<feature type="active site" description="Pros-phosphohistidine intermediate" evidence="1">
    <location>
        <position position="115"/>
    </location>
</feature>
<feature type="binding site" evidence="1">
    <location>
        <position position="9"/>
    </location>
    <ligand>
        <name>ATP</name>
        <dbReference type="ChEBI" id="CHEBI:30616"/>
    </ligand>
</feature>
<feature type="binding site" evidence="1">
    <location>
        <position position="57"/>
    </location>
    <ligand>
        <name>ATP</name>
        <dbReference type="ChEBI" id="CHEBI:30616"/>
    </ligand>
</feature>
<feature type="binding site" evidence="1">
    <location>
        <position position="85"/>
    </location>
    <ligand>
        <name>ATP</name>
        <dbReference type="ChEBI" id="CHEBI:30616"/>
    </ligand>
</feature>
<feature type="binding site" evidence="1">
    <location>
        <position position="91"/>
    </location>
    <ligand>
        <name>ATP</name>
        <dbReference type="ChEBI" id="CHEBI:30616"/>
    </ligand>
</feature>
<feature type="binding site" evidence="1">
    <location>
        <position position="102"/>
    </location>
    <ligand>
        <name>ATP</name>
        <dbReference type="ChEBI" id="CHEBI:30616"/>
    </ligand>
</feature>
<feature type="binding site" evidence="1">
    <location>
        <position position="112"/>
    </location>
    <ligand>
        <name>ATP</name>
        <dbReference type="ChEBI" id="CHEBI:30616"/>
    </ligand>
</feature>
<keyword id="KW-0067">ATP-binding</keyword>
<keyword id="KW-0963">Cytoplasm</keyword>
<keyword id="KW-0418">Kinase</keyword>
<keyword id="KW-0460">Magnesium</keyword>
<keyword id="KW-0479">Metal-binding</keyword>
<keyword id="KW-0546">Nucleotide metabolism</keyword>
<keyword id="KW-0547">Nucleotide-binding</keyword>
<keyword id="KW-0597">Phosphoprotein</keyword>
<keyword id="KW-0808">Transferase</keyword>
<sequence length="149" mass="16483">MEKTFIMLKPDAVQRGLVGQIIARFEAKGCKLVGMKLMSVDQALAEQHYAEHKGKSFFEPTVQYIMSSPVVAMVWEGKNVVALARELMGATNPANANPGSIRGSFGMDISRNVIHGSDSVASAEREIALYFRPEELCDYRKAGEEWLSE</sequence>
<organism>
    <name type="scientific">Desulfitobacterium hafniense (strain DSM 10664 / DCB-2)</name>
    <dbReference type="NCBI Taxonomy" id="272564"/>
    <lineage>
        <taxon>Bacteria</taxon>
        <taxon>Bacillati</taxon>
        <taxon>Bacillota</taxon>
        <taxon>Clostridia</taxon>
        <taxon>Eubacteriales</taxon>
        <taxon>Desulfitobacteriaceae</taxon>
        <taxon>Desulfitobacterium</taxon>
    </lineage>
</organism>
<comment type="function">
    <text evidence="1">Major role in the synthesis of nucleoside triphosphates other than ATP. The ATP gamma phosphate is transferred to the NDP beta phosphate via a ping-pong mechanism, using a phosphorylated active-site intermediate.</text>
</comment>
<comment type="catalytic activity">
    <reaction evidence="1">
        <text>a 2'-deoxyribonucleoside 5'-diphosphate + ATP = a 2'-deoxyribonucleoside 5'-triphosphate + ADP</text>
        <dbReference type="Rhea" id="RHEA:44640"/>
        <dbReference type="ChEBI" id="CHEBI:30616"/>
        <dbReference type="ChEBI" id="CHEBI:61560"/>
        <dbReference type="ChEBI" id="CHEBI:73316"/>
        <dbReference type="ChEBI" id="CHEBI:456216"/>
        <dbReference type="EC" id="2.7.4.6"/>
    </reaction>
</comment>
<comment type="catalytic activity">
    <reaction evidence="1">
        <text>a ribonucleoside 5'-diphosphate + ATP = a ribonucleoside 5'-triphosphate + ADP</text>
        <dbReference type="Rhea" id="RHEA:18113"/>
        <dbReference type="ChEBI" id="CHEBI:30616"/>
        <dbReference type="ChEBI" id="CHEBI:57930"/>
        <dbReference type="ChEBI" id="CHEBI:61557"/>
        <dbReference type="ChEBI" id="CHEBI:456216"/>
        <dbReference type="EC" id="2.7.4.6"/>
    </reaction>
</comment>
<comment type="cofactor">
    <cofactor evidence="1">
        <name>Mg(2+)</name>
        <dbReference type="ChEBI" id="CHEBI:18420"/>
    </cofactor>
</comment>
<comment type="subunit">
    <text evidence="1">Homotetramer.</text>
</comment>
<comment type="subcellular location">
    <subcellularLocation>
        <location evidence="1">Cytoplasm</location>
    </subcellularLocation>
</comment>
<comment type="similarity">
    <text evidence="1">Belongs to the NDK family.</text>
</comment>
<reference key="1">
    <citation type="journal article" date="2012" name="BMC Microbiol.">
        <title>Genome sequence of Desulfitobacterium hafniense DCB-2, a Gram-positive anaerobe capable of dehalogenation and metal reduction.</title>
        <authorList>
            <person name="Kim S.H."/>
            <person name="Harzman C."/>
            <person name="Davis J.K."/>
            <person name="Hutcheson R."/>
            <person name="Broderick J.B."/>
            <person name="Marsh T.L."/>
            <person name="Tiedje J.M."/>
        </authorList>
    </citation>
    <scope>NUCLEOTIDE SEQUENCE [LARGE SCALE GENOMIC DNA]</scope>
    <source>
        <strain>DSM 10664 / DCB-2</strain>
    </source>
</reference>
<dbReference type="EC" id="2.7.4.6" evidence="1"/>
<dbReference type="EMBL" id="CP001336">
    <property type="protein sequence ID" value="ACL18214.1"/>
    <property type="molecule type" value="Genomic_DNA"/>
</dbReference>
<dbReference type="RefSeq" id="WP_015942599.1">
    <property type="nucleotide sequence ID" value="NC_011830.1"/>
</dbReference>
<dbReference type="SMR" id="B8FZD1"/>
<dbReference type="KEGG" id="dhd:Dhaf_0146"/>
<dbReference type="HOGENOM" id="CLU_060216_6_3_9"/>
<dbReference type="Proteomes" id="UP000007726">
    <property type="component" value="Chromosome"/>
</dbReference>
<dbReference type="GO" id="GO:0005737">
    <property type="term" value="C:cytoplasm"/>
    <property type="evidence" value="ECO:0007669"/>
    <property type="project" value="UniProtKB-SubCell"/>
</dbReference>
<dbReference type="GO" id="GO:0005524">
    <property type="term" value="F:ATP binding"/>
    <property type="evidence" value="ECO:0007669"/>
    <property type="project" value="UniProtKB-UniRule"/>
</dbReference>
<dbReference type="GO" id="GO:0046872">
    <property type="term" value="F:metal ion binding"/>
    <property type="evidence" value="ECO:0007669"/>
    <property type="project" value="UniProtKB-KW"/>
</dbReference>
<dbReference type="GO" id="GO:0004550">
    <property type="term" value="F:nucleoside diphosphate kinase activity"/>
    <property type="evidence" value="ECO:0007669"/>
    <property type="project" value="UniProtKB-UniRule"/>
</dbReference>
<dbReference type="GO" id="GO:0006241">
    <property type="term" value="P:CTP biosynthetic process"/>
    <property type="evidence" value="ECO:0007669"/>
    <property type="project" value="UniProtKB-UniRule"/>
</dbReference>
<dbReference type="GO" id="GO:0006183">
    <property type="term" value="P:GTP biosynthetic process"/>
    <property type="evidence" value="ECO:0007669"/>
    <property type="project" value="UniProtKB-UniRule"/>
</dbReference>
<dbReference type="GO" id="GO:0006228">
    <property type="term" value="P:UTP biosynthetic process"/>
    <property type="evidence" value="ECO:0007669"/>
    <property type="project" value="UniProtKB-UniRule"/>
</dbReference>
<dbReference type="CDD" id="cd04413">
    <property type="entry name" value="NDPk_I"/>
    <property type="match status" value="1"/>
</dbReference>
<dbReference type="FunFam" id="3.30.70.141:FF:000002">
    <property type="entry name" value="Nucleoside diphosphate kinase"/>
    <property type="match status" value="1"/>
</dbReference>
<dbReference type="Gene3D" id="3.30.70.141">
    <property type="entry name" value="Nucleoside diphosphate kinase-like domain"/>
    <property type="match status" value="1"/>
</dbReference>
<dbReference type="HAMAP" id="MF_00451">
    <property type="entry name" value="NDP_kinase"/>
    <property type="match status" value="1"/>
</dbReference>
<dbReference type="InterPro" id="IPR034907">
    <property type="entry name" value="NDK-like_dom"/>
</dbReference>
<dbReference type="InterPro" id="IPR036850">
    <property type="entry name" value="NDK-like_dom_sf"/>
</dbReference>
<dbReference type="InterPro" id="IPR001564">
    <property type="entry name" value="Nucleoside_diP_kinase"/>
</dbReference>
<dbReference type="InterPro" id="IPR023005">
    <property type="entry name" value="Nucleoside_diP_kinase_AS"/>
</dbReference>
<dbReference type="NCBIfam" id="NF001908">
    <property type="entry name" value="PRK00668.1"/>
    <property type="match status" value="1"/>
</dbReference>
<dbReference type="PANTHER" id="PTHR11349">
    <property type="entry name" value="NUCLEOSIDE DIPHOSPHATE KINASE"/>
    <property type="match status" value="1"/>
</dbReference>
<dbReference type="Pfam" id="PF00334">
    <property type="entry name" value="NDK"/>
    <property type="match status" value="1"/>
</dbReference>
<dbReference type="PRINTS" id="PR01243">
    <property type="entry name" value="NUCDPKINASE"/>
</dbReference>
<dbReference type="SMART" id="SM00562">
    <property type="entry name" value="NDK"/>
    <property type="match status" value="1"/>
</dbReference>
<dbReference type="SUPFAM" id="SSF54919">
    <property type="entry name" value="Nucleoside diphosphate kinase, NDK"/>
    <property type="match status" value="1"/>
</dbReference>
<dbReference type="PROSITE" id="PS00469">
    <property type="entry name" value="NDPK"/>
    <property type="match status" value="1"/>
</dbReference>
<dbReference type="PROSITE" id="PS51374">
    <property type="entry name" value="NDPK_LIKE"/>
    <property type="match status" value="1"/>
</dbReference>